<sequence length="206" mass="23275">MDADSKRFLATLRSRSEMLMGFEEIDGDDDFQEEFACPFCAESYDIIGLCCHIDDEHTLESKNAVCPVCSLKVGVDIVAHITLHHGSLFKLQRKRKSRKSGTNSTLSLLRKELREGDLQRLLGFTSRNGSVASSVTPDPLLSSFISPTRSQSSPAPRQTKNVSEDKQIERKRQVFISPVSLKDREERRHKSEFVQRLLSSAIFDEV</sequence>
<name>DI191_ARATH</name>
<organism>
    <name type="scientific">Arabidopsis thaliana</name>
    <name type="common">Mouse-ear cress</name>
    <dbReference type="NCBI Taxonomy" id="3702"/>
    <lineage>
        <taxon>Eukaryota</taxon>
        <taxon>Viridiplantae</taxon>
        <taxon>Streptophyta</taxon>
        <taxon>Embryophyta</taxon>
        <taxon>Tracheophyta</taxon>
        <taxon>Spermatophyta</taxon>
        <taxon>Magnoliopsida</taxon>
        <taxon>eudicotyledons</taxon>
        <taxon>Gunneridae</taxon>
        <taxon>Pentapetalae</taxon>
        <taxon>rosids</taxon>
        <taxon>malvids</taxon>
        <taxon>Brassicales</taxon>
        <taxon>Brassicaceae</taxon>
        <taxon>Camelineae</taxon>
        <taxon>Arabidopsis</taxon>
    </lineage>
</organism>
<accession>Q39083</accession>
<accession>F4I523</accession>
<accession>Q56ZC1</accession>
<accession>Q94AR0</accession>
<accession>Q9C7K3</accession>
<comment type="subunit">
    <text evidence="2 3">Interacts with ADO2/LKP2, CPK11 and CPK4. Weak interaction with CPK12 and no interactions with CPK1, CPK5 or CPK26.</text>
</comment>
<comment type="interaction">
    <interactant intactId="EBI-979339">
        <id>Q39083</id>
    </interactant>
    <interactant intactId="EBI-979321">
        <id>Q39016</id>
        <label>CPK11</label>
    </interactant>
    <organismsDiffer>false</organismsDiffer>
    <experiments>25</experiments>
</comment>
<comment type="interaction">
    <interactant intactId="EBI-979339">
        <id>Q39083</id>
    </interactant>
    <interactant intactId="EBI-979475">
        <id>Q38869</id>
        <label>CPK4</label>
    </interactant>
    <organismsDiffer>false</organismsDiffer>
    <experiments>5</experiments>
</comment>
<comment type="subcellular location">
    <subcellularLocation>
        <location evidence="2 3 4">Nucleus</location>
    </subcellularLocation>
</comment>
<comment type="alternative products">
    <event type="alternative splicing"/>
    <isoform>
        <id>Q39083-1</id>
        <name>1</name>
        <sequence type="displayed"/>
    </isoform>
    <text>A number of isoforms are produced. According to EST sequences.</text>
</comment>
<comment type="tissue specificity">
    <text evidence="4">Expressed in seedlings, roots, leaves, stems, flowers and siliques.</text>
</comment>
<comment type="induction">
    <text evidence="4 5">By drought stress, but not by abscisic acid.</text>
</comment>
<comment type="domain">
    <text>The NLS/NES region (98-121) is necessary and sufficient for interaction with CPK11.</text>
</comment>
<comment type="PTM">
    <text evidence="3 4">Phosphorylated within the NLS/NES region.</text>
</comment>
<comment type="similarity">
    <text evidence="6">Belongs to the Di19 family.</text>
</comment>
<comment type="sequence caution" evidence="6">
    <conflict type="erroneous gene model prediction">
        <sequence resource="EMBL-CDS" id="AAG50925"/>
    </conflict>
</comment>
<comment type="sequence caution" evidence="6">
    <conflict type="frameshift">
        <sequence resource="EMBL-CDS" id="AAG50925"/>
    </conflict>
</comment>
<comment type="sequence caution" evidence="6">
    <conflict type="erroneous gene model prediction">
        <sequence resource="EMBL-CDS" id="AEE33372"/>
    </conflict>
</comment>
<proteinExistence type="evidence at protein level"/>
<protein>
    <recommendedName>
        <fullName>Protein DEHYDRATION-INDUCED 19</fullName>
        <shortName>AtDi19-1</shortName>
    </recommendedName>
</protein>
<evidence type="ECO:0000256" key="1">
    <source>
        <dbReference type="SAM" id="MobiDB-lite"/>
    </source>
</evidence>
<evidence type="ECO:0000269" key="2">
    <source>
    </source>
</evidence>
<evidence type="ECO:0000269" key="3">
    <source>
    </source>
</evidence>
<evidence type="ECO:0000269" key="4">
    <source>
    </source>
</evidence>
<evidence type="ECO:0000269" key="5">
    <source>
    </source>
</evidence>
<evidence type="ECO:0000305" key="6"/>
<gene>
    <name type="primary">DI19-1</name>
    <name type="synonym">DI19</name>
    <name type="ordered locus">At1g56280</name>
    <name type="ORF">F14G9.11</name>
</gene>
<dbReference type="EMBL" id="X78584">
    <property type="protein sequence ID" value="CAA55321.1"/>
    <property type="molecule type" value="mRNA"/>
</dbReference>
<dbReference type="EMBL" id="AC069159">
    <property type="protein sequence ID" value="AAG50925.1"/>
    <property type="status" value="ALT_SEQ"/>
    <property type="molecule type" value="Genomic_DNA"/>
</dbReference>
<dbReference type="EMBL" id="CP002684">
    <property type="protein sequence ID" value="AEE33372.1"/>
    <property type="status" value="ALT_SEQ"/>
    <property type="molecule type" value="Genomic_DNA"/>
</dbReference>
<dbReference type="EMBL" id="AY045868">
    <property type="protein sequence ID" value="AAK76542.1"/>
    <property type="molecule type" value="mRNA"/>
</dbReference>
<dbReference type="EMBL" id="BT020564">
    <property type="protein sequence ID" value="AAW70410.1"/>
    <property type="molecule type" value="mRNA"/>
</dbReference>
<dbReference type="EMBL" id="AK221045">
    <property type="protein sequence ID" value="BAD94799.1"/>
    <property type="molecule type" value="mRNA"/>
</dbReference>
<dbReference type="PIR" id="E96604">
    <property type="entry name" value="E96604"/>
</dbReference>
<dbReference type="PIR" id="S51478">
    <property type="entry name" value="S51478"/>
</dbReference>
<dbReference type="RefSeq" id="NP_564715.4">
    <property type="nucleotide sequence ID" value="NM_104507.4"/>
</dbReference>
<dbReference type="BioGRID" id="27306">
    <property type="interactions" value="7"/>
</dbReference>
<dbReference type="DIP" id="DIP-37941N"/>
<dbReference type="FunCoup" id="Q39083">
    <property type="interactions" value="2"/>
</dbReference>
<dbReference type="IntAct" id="Q39083">
    <property type="interactions" value="4"/>
</dbReference>
<dbReference type="MINT" id="Q39083"/>
<dbReference type="STRING" id="3702.Q39083"/>
<dbReference type="iPTMnet" id="Q39083"/>
<dbReference type="PaxDb" id="3702-AT1G56280.1"/>
<dbReference type="GeneID" id="842081"/>
<dbReference type="KEGG" id="ath:AT1G56280"/>
<dbReference type="Araport" id="AT1G56280"/>
<dbReference type="TAIR" id="AT1G56280">
    <property type="gene designation" value="DI19"/>
</dbReference>
<dbReference type="eggNOG" id="ENOG502QW9I">
    <property type="taxonomic scope" value="Eukaryota"/>
</dbReference>
<dbReference type="InParanoid" id="Q39083"/>
<dbReference type="PhylomeDB" id="Q39083"/>
<dbReference type="PRO" id="PR:Q39083"/>
<dbReference type="Proteomes" id="UP000006548">
    <property type="component" value="Chromosome 1"/>
</dbReference>
<dbReference type="ExpressionAtlas" id="Q39083">
    <property type="expression patterns" value="baseline and differential"/>
</dbReference>
<dbReference type="GO" id="GO:0005634">
    <property type="term" value="C:nucleus"/>
    <property type="evidence" value="ECO:0007669"/>
    <property type="project" value="UniProtKB-SubCell"/>
</dbReference>
<dbReference type="InterPro" id="IPR033347">
    <property type="entry name" value="DI19"/>
</dbReference>
<dbReference type="InterPro" id="IPR027935">
    <property type="entry name" value="Di19_C"/>
</dbReference>
<dbReference type="InterPro" id="IPR008598">
    <property type="entry name" value="Di19_Zn-bd"/>
</dbReference>
<dbReference type="PANTHER" id="PTHR31875">
    <property type="entry name" value="PROTEIN DEHYDRATION-INDUCED 19"/>
    <property type="match status" value="1"/>
</dbReference>
<dbReference type="PANTHER" id="PTHR31875:SF26">
    <property type="entry name" value="PROTEIN DEHYDRATION-INDUCED 19-RELATED"/>
    <property type="match status" value="1"/>
</dbReference>
<dbReference type="Pfam" id="PF14571">
    <property type="entry name" value="Di19_C"/>
    <property type="match status" value="1"/>
</dbReference>
<dbReference type="Pfam" id="PF05605">
    <property type="entry name" value="zf-Di19"/>
    <property type="match status" value="1"/>
</dbReference>
<reference key="1">
    <citation type="journal article" date="1995" name="Mol. Gen. Genet.">
        <title>Abscisic acid-dependent and -independent regulation of gene expression by progressive drought in Arabidopsis thaliana.</title>
        <authorList>
            <person name="Gosti F."/>
            <person name="Bertauche N."/>
            <person name="Vartanian N."/>
            <person name="Giraudat J."/>
        </authorList>
    </citation>
    <scope>NUCLEOTIDE SEQUENCE [MRNA]</scope>
    <scope>INDUCTION BY DROUGHT</scope>
    <source>
        <strain>cv. Columbia</strain>
        <tissue>Root</tissue>
    </source>
</reference>
<reference key="2">
    <citation type="journal article" date="2000" name="Nature">
        <title>Sequence and analysis of chromosome 1 of the plant Arabidopsis thaliana.</title>
        <authorList>
            <person name="Theologis A."/>
            <person name="Ecker J.R."/>
            <person name="Palm C.J."/>
            <person name="Federspiel N.A."/>
            <person name="Kaul S."/>
            <person name="White O."/>
            <person name="Alonso J."/>
            <person name="Altafi H."/>
            <person name="Araujo R."/>
            <person name="Bowman C.L."/>
            <person name="Brooks S.Y."/>
            <person name="Buehler E."/>
            <person name="Chan A."/>
            <person name="Chao Q."/>
            <person name="Chen H."/>
            <person name="Cheuk R.F."/>
            <person name="Chin C.W."/>
            <person name="Chung M.K."/>
            <person name="Conn L."/>
            <person name="Conway A.B."/>
            <person name="Conway A.R."/>
            <person name="Creasy T.H."/>
            <person name="Dewar K."/>
            <person name="Dunn P."/>
            <person name="Etgu P."/>
            <person name="Feldblyum T.V."/>
            <person name="Feng J.-D."/>
            <person name="Fong B."/>
            <person name="Fujii C.Y."/>
            <person name="Gill J.E."/>
            <person name="Goldsmith A.D."/>
            <person name="Haas B."/>
            <person name="Hansen N.F."/>
            <person name="Hughes B."/>
            <person name="Huizar L."/>
            <person name="Hunter J.L."/>
            <person name="Jenkins J."/>
            <person name="Johnson-Hopson C."/>
            <person name="Khan S."/>
            <person name="Khaykin E."/>
            <person name="Kim C.J."/>
            <person name="Koo H.L."/>
            <person name="Kremenetskaia I."/>
            <person name="Kurtz D.B."/>
            <person name="Kwan A."/>
            <person name="Lam B."/>
            <person name="Langin-Hooper S."/>
            <person name="Lee A."/>
            <person name="Lee J.M."/>
            <person name="Lenz C.A."/>
            <person name="Li J.H."/>
            <person name="Li Y.-P."/>
            <person name="Lin X."/>
            <person name="Liu S.X."/>
            <person name="Liu Z.A."/>
            <person name="Luros J.S."/>
            <person name="Maiti R."/>
            <person name="Marziali A."/>
            <person name="Militscher J."/>
            <person name="Miranda M."/>
            <person name="Nguyen M."/>
            <person name="Nierman W.C."/>
            <person name="Osborne B.I."/>
            <person name="Pai G."/>
            <person name="Peterson J."/>
            <person name="Pham P.K."/>
            <person name="Rizzo M."/>
            <person name="Rooney T."/>
            <person name="Rowley D."/>
            <person name="Sakano H."/>
            <person name="Salzberg S.L."/>
            <person name="Schwartz J.R."/>
            <person name="Shinn P."/>
            <person name="Southwick A.M."/>
            <person name="Sun H."/>
            <person name="Tallon L.J."/>
            <person name="Tambunga G."/>
            <person name="Toriumi M.J."/>
            <person name="Town C.D."/>
            <person name="Utterback T."/>
            <person name="Van Aken S."/>
            <person name="Vaysberg M."/>
            <person name="Vysotskaia V.S."/>
            <person name="Walker M."/>
            <person name="Wu D."/>
            <person name="Yu G."/>
            <person name="Fraser C.M."/>
            <person name="Venter J.C."/>
            <person name="Davis R.W."/>
        </authorList>
    </citation>
    <scope>NUCLEOTIDE SEQUENCE [LARGE SCALE GENOMIC DNA]</scope>
    <source>
        <strain>cv. Columbia</strain>
    </source>
</reference>
<reference key="3">
    <citation type="journal article" date="2017" name="Plant J.">
        <title>Araport11: a complete reannotation of the Arabidopsis thaliana reference genome.</title>
        <authorList>
            <person name="Cheng C.Y."/>
            <person name="Krishnakumar V."/>
            <person name="Chan A.P."/>
            <person name="Thibaud-Nissen F."/>
            <person name="Schobel S."/>
            <person name="Town C.D."/>
        </authorList>
    </citation>
    <scope>GENOME REANNOTATION</scope>
    <source>
        <strain>cv. Columbia</strain>
    </source>
</reference>
<reference key="4">
    <citation type="journal article" date="2003" name="Science">
        <title>Empirical analysis of transcriptional activity in the Arabidopsis genome.</title>
        <authorList>
            <person name="Yamada K."/>
            <person name="Lim J."/>
            <person name="Dale J.M."/>
            <person name="Chen H."/>
            <person name="Shinn P."/>
            <person name="Palm C.J."/>
            <person name="Southwick A.M."/>
            <person name="Wu H.C."/>
            <person name="Kim C.J."/>
            <person name="Nguyen M."/>
            <person name="Pham P.K."/>
            <person name="Cheuk R.F."/>
            <person name="Karlin-Newmann G."/>
            <person name="Liu S.X."/>
            <person name="Lam B."/>
            <person name="Sakano H."/>
            <person name="Wu T."/>
            <person name="Yu G."/>
            <person name="Miranda M."/>
            <person name="Quach H.L."/>
            <person name="Tripp M."/>
            <person name="Chang C.H."/>
            <person name="Lee J.M."/>
            <person name="Toriumi M.J."/>
            <person name="Chan M.M."/>
            <person name="Tang C.C."/>
            <person name="Onodera C.S."/>
            <person name="Deng J.M."/>
            <person name="Akiyama K."/>
            <person name="Ansari Y."/>
            <person name="Arakawa T."/>
            <person name="Banh J."/>
            <person name="Banno F."/>
            <person name="Bowser L."/>
            <person name="Brooks S.Y."/>
            <person name="Carninci P."/>
            <person name="Chao Q."/>
            <person name="Choy N."/>
            <person name="Enju A."/>
            <person name="Goldsmith A.D."/>
            <person name="Gurjal M."/>
            <person name="Hansen N.F."/>
            <person name="Hayashizaki Y."/>
            <person name="Johnson-Hopson C."/>
            <person name="Hsuan V.W."/>
            <person name="Iida K."/>
            <person name="Karnes M."/>
            <person name="Khan S."/>
            <person name="Koesema E."/>
            <person name="Ishida J."/>
            <person name="Jiang P.X."/>
            <person name="Jones T."/>
            <person name="Kawai J."/>
            <person name="Kamiya A."/>
            <person name="Meyers C."/>
            <person name="Nakajima M."/>
            <person name="Narusaka M."/>
            <person name="Seki M."/>
            <person name="Sakurai T."/>
            <person name="Satou M."/>
            <person name="Tamse R."/>
            <person name="Vaysberg M."/>
            <person name="Wallender E.K."/>
            <person name="Wong C."/>
            <person name="Yamamura Y."/>
            <person name="Yuan S."/>
            <person name="Shinozaki K."/>
            <person name="Davis R.W."/>
            <person name="Theologis A."/>
            <person name="Ecker J.R."/>
        </authorList>
    </citation>
    <scope>NUCLEOTIDE SEQUENCE [LARGE SCALE MRNA]</scope>
    <source>
        <strain>cv. Columbia</strain>
    </source>
</reference>
<reference key="5">
    <citation type="submission" date="2005-01" db="EMBL/GenBank/DDBJ databases">
        <title>Arabidopsis ORF clones.</title>
        <authorList>
            <person name="Cheuk R.F."/>
            <person name="Chen H."/>
            <person name="Kim C.J."/>
            <person name="Shinn P."/>
            <person name="Ecker J.R."/>
        </authorList>
    </citation>
    <scope>NUCLEOTIDE SEQUENCE [LARGE SCALE MRNA]</scope>
    <source>
        <strain>cv. Columbia</strain>
    </source>
</reference>
<reference key="6">
    <citation type="submission" date="2005-03" db="EMBL/GenBank/DDBJ databases">
        <title>Large-scale analysis of RIKEN Arabidopsis full-length (RAFL) cDNAs.</title>
        <authorList>
            <person name="Totoki Y."/>
            <person name="Seki M."/>
            <person name="Ishida J."/>
            <person name="Nakajima M."/>
            <person name="Enju A."/>
            <person name="Kamiya A."/>
            <person name="Narusaka M."/>
            <person name="Shin-i T."/>
            <person name="Nakagawa M."/>
            <person name="Sakamoto N."/>
            <person name="Oishi K."/>
            <person name="Kohara Y."/>
            <person name="Kobayashi M."/>
            <person name="Toyoda A."/>
            <person name="Sakaki Y."/>
            <person name="Sakurai T."/>
            <person name="Iida K."/>
            <person name="Akiyama K."/>
            <person name="Satou M."/>
            <person name="Toyoda T."/>
            <person name="Konagaya A."/>
            <person name="Carninci P."/>
            <person name="Kawai J."/>
            <person name="Hayashizaki Y."/>
            <person name="Shinozaki K."/>
        </authorList>
    </citation>
    <scope>NUCLEOTIDE SEQUENCE [LARGE SCALE MRNA] OF 121-206</scope>
    <source>
        <strain>cv. Columbia</strain>
    </source>
</reference>
<reference key="7">
    <citation type="journal article" date="2005" name="Plant Cell Physiol.">
        <title>Identification of LOV KELCH PROTEIN2 (LKP2)-interacting factors that can recruit LKP2 to nuclear bodies.</title>
        <authorList>
            <person name="Fukamatsu Y."/>
            <person name="Mitsui S."/>
            <person name="Yasuhara M."/>
            <person name="Tokioka Y."/>
            <person name="Ihara N."/>
            <person name="Fujita S."/>
            <person name="Kiyosue T."/>
        </authorList>
    </citation>
    <scope>INTERACTION WITH LKP2</scope>
    <scope>SUBCELLULAR LOCATION</scope>
</reference>
<reference key="8">
    <citation type="journal article" date="2006" name="FEBS Lett.">
        <title>A novel yeast two-hybrid approach to identify CDPK substrates: characterization of the interaction between AtCPK11 and AtDi19, a nuclear zinc finger protein.</title>
        <authorList>
            <person name="Rodriguez Milla M.A."/>
            <person name="Uno Y."/>
            <person name="Chang I.-F."/>
            <person name="Townsend J."/>
            <person name="Maher E.A."/>
            <person name="Quilici D."/>
            <person name="Cushman J.C."/>
        </authorList>
    </citation>
    <scope>INTERACTION WITH CPK4; CPK11 AND CPK12</scope>
    <scope>SUBCELLULAR LOCATION</scope>
    <scope>PHOSPHORYLATION AT THR-105 AND SER-107</scope>
</reference>
<reference key="9">
    <citation type="journal article" date="2006" name="Plant Mol. Biol.">
        <title>The Arabidopsis AtDi19 gene family encodes a novel type of Cys2/His2 zinc-finger protein implicated in ABA-independent dehydration, high-salinity stress and light signaling pathways.</title>
        <authorList>
            <person name="Rodriguez Milla M.A."/>
            <person name="Townsend J."/>
            <person name="Chang I.-F."/>
            <person name="Cushman J.C."/>
        </authorList>
    </citation>
    <scope>SUBCELLULAR LOCATION</scope>
    <scope>TISSUE SPECIFICITY</scope>
    <scope>PHOSPHORYLATION</scope>
    <scope>INDUCTION BY DROUGHT</scope>
    <scope>GENE FAMILY</scope>
    <scope>NOMENCLATURE</scope>
</reference>
<keyword id="KW-0025">Alternative splicing</keyword>
<keyword id="KW-0539">Nucleus</keyword>
<keyword id="KW-0597">Phosphoprotein</keyword>
<keyword id="KW-1185">Reference proteome</keyword>
<feature type="chain" id="PRO_0000304413" description="Protein DEHYDRATION-INDUCED 19">
    <location>
        <begin position="1"/>
        <end position="206"/>
    </location>
</feature>
<feature type="region of interest" description="Disordered" evidence="1">
    <location>
        <begin position="142"/>
        <end position="167"/>
    </location>
</feature>
<feature type="compositionally biased region" description="Polar residues" evidence="1">
    <location>
        <begin position="143"/>
        <end position="161"/>
    </location>
</feature>
<feature type="modified residue" description="Phosphothreonine" evidence="3">
    <location>
        <position position="105"/>
    </location>
</feature>
<feature type="modified residue" description="Phosphoserine" evidence="3">
    <location>
        <position position="107"/>
    </location>
</feature>
<feature type="sequence conflict" description="In Ref. 1; CAA55321." evidence="6" ref="1">
    <original>E</original>
    <variation>G</variation>
    <location>
        <position position="112"/>
    </location>
</feature>